<name>RL35_SYNJB</name>
<sequence>MPKIKTRKAAAKRFRLTGSGKFMRRRAGHNHLLEHKTSKRKRKLAGVALVDKRDVVNVRLMLPNTH</sequence>
<feature type="chain" id="PRO_0000258773" description="Large ribosomal subunit protein bL35">
    <location>
        <begin position="1"/>
        <end position="66"/>
    </location>
</feature>
<accession>Q2JI03</accession>
<gene>
    <name evidence="1" type="primary">rpmI</name>
    <name evidence="1" type="synonym">rpl35</name>
    <name type="ordered locus">CYB_2848</name>
</gene>
<evidence type="ECO:0000255" key="1">
    <source>
        <dbReference type="HAMAP-Rule" id="MF_00514"/>
    </source>
</evidence>
<evidence type="ECO:0000305" key="2"/>
<comment type="similarity">
    <text evidence="1">Belongs to the bacterial ribosomal protein bL35 family.</text>
</comment>
<protein>
    <recommendedName>
        <fullName evidence="1">Large ribosomal subunit protein bL35</fullName>
    </recommendedName>
    <alternativeName>
        <fullName evidence="2">50S ribosomal protein L35</fullName>
    </alternativeName>
</protein>
<reference key="1">
    <citation type="journal article" date="2007" name="ISME J.">
        <title>Population level functional diversity in a microbial community revealed by comparative genomic and metagenomic analyses.</title>
        <authorList>
            <person name="Bhaya D."/>
            <person name="Grossman A.R."/>
            <person name="Steunou A.-S."/>
            <person name="Khuri N."/>
            <person name="Cohan F.M."/>
            <person name="Hamamura N."/>
            <person name="Melendrez M.C."/>
            <person name="Bateson M.M."/>
            <person name="Ward D.M."/>
            <person name="Heidelberg J.F."/>
        </authorList>
    </citation>
    <scope>NUCLEOTIDE SEQUENCE [LARGE SCALE GENOMIC DNA]</scope>
    <source>
        <strain>JA-2-3B'a(2-13)</strain>
    </source>
</reference>
<dbReference type="EMBL" id="CP000240">
    <property type="protein sequence ID" value="ABD03768.1"/>
    <property type="molecule type" value="Genomic_DNA"/>
</dbReference>
<dbReference type="RefSeq" id="WP_011434387.1">
    <property type="nucleotide sequence ID" value="NC_007776.1"/>
</dbReference>
<dbReference type="SMR" id="Q2JI03"/>
<dbReference type="STRING" id="321332.CYB_2848"/>
<dbReference type="KEGG" id="cyb:CYB_2848"/>
<dbReference type="eggNOG" id="COG0291">
    <property type="taxonomic scope" value="Bacteria"/>
</dbReference>
<dbReference type="HOGENOM" id="CLU_169643_4_0_3"/>
<dbReference type="OrthoDB" id="47476at2"/>
<dbReference type="Proteomes" id="UP000001938">
    <property type="component" value="Chromosome"/>
</dbReference>
<dbReference type="GO" id="GO:0022625">
    <property type="term" value="C:cytosolic large ribosomal subunit"/>
    <property type="evidence" value="ECO:0007669"/>
    <property type="project" value="TreeGrafter"/>
</dbReference>
<dbReference type="GO" id="GO:0003735">
    <property type="term" value="F:structural constituent of ribosome"/>
    <property type="evidence" value="ECO:0007669"/>
    <property type="project" value="InterPro"/>
</dbReference>
<dbReference type="GO" id="GO:0006412">
    <property type="term" value="P:translation"/>
    <property type="evidence" value="ECO:0007669"/>
    <property type="project" value="UniProtKB-UniRule"/>
</dbReference>
<dbReference type="FunFam" id="4.10.410.60:FF:000001">
    <property type="entry name" value="50S ribosomal protein L35"/>
    <property type="match status" value="1"/>
</dbReference>
<dbReference type="Gene3D" id="4.10.410.60">
    <property type="match status" value="1"/>
</dbReference>
<dbReference type="HAMAP" id="MF_00514">
    <property type="entry name" value="Ribosomal_bL35"/>
    <property type="match status" value="1"/>
</dbReference>
<dbReference type="InterPro" id="IPR001706">
    <property type="entry name" value="Ribosomal_bL35"/>
</dbReference>
<dbReference type="InterPro" id="IPR021137">
    <property type="entry name" value="Ribosomal_bL35-like"/>
</dbReference>
<dbReference type="InterPro" id="IPR018265">
    <property type="entry name" value="Ribosomal_bL35_CS"/>
</dbReference>
<dbReference type="InterPro" id="IPR037229">
    <property type="entry name" value="Ribosomal_bL35_sf"/>
</dbReference>
<dbReference type="NCBIfam" id="TIGR00001">
    <property type="entry name" value="rpmI_bact"/>
    <property type="match status" value="1"/>
</dbReference>
<dbReference type="PANTHER" id="PTHR33343">
    <property type="entry name" value="54S RIBOSOMAL PROTEIN BL35M"/>
    <property type="match status" value="1"/>
</dbReference>
<dbReference type="PANTHER" id="PTHR33343:SF1">
    <property type="entry name" value="LARGE RIBOSOMAL SUBUNIT PROTEIN BL35M"/>
    <property type="match status" value="1"/>
</dbReference>
<dbReference type="Pfam" id="PF01632">
    <property type="entry name" value="Ribosomal_L35p"/>
    <property type="match status" value="1"/>
</dbReference>
<dbReference type="PRINTS" id="PR00064">
    <property type="entry name" value="RIBOSOMALL35"/>
</dbReference>
<dbReference type="SUPFAM" id="SSF143034">
    <property type="entry name" value="L35p-like"/>
    <property type="match status" value="1"/>
</dbReference>
<dbReference type="PROSITE" id="PS00936">
    <property type="entry name" value="RIBOSOMAL_L35"/>
    <property type="match status" value="1"/>
</dbReference>
<keyword id="KW-1185">Reference proteome</keyword>
<keyword id="KW-0687">Ribonucleoprotein</keyword>
<keyword id="KW-0689">Ribosomal protein</keyword>
<organism>
    <name type="scientific">Synechococcus sp. (strain JA-2-3B'a(2-13))</name>
    <name type="common">Cyanobacteria bacterium Yellowstone B-Prime</name>
    <dbReference type="NCBI Taxonomy" id="321332"/>
    <lineage>
        <taxon>Bacteria</taxon>
        <taxon>Bacillati</taxon>
        <taxon>Cyanobacteriota</taxon>
        <taxon>Cyanophyceae</taxon>
        <taxon>Synechococcales</taxon>
        <taxon>Synechococcaceae</taxon>
        <taxon>Synechococcus</taxon>
    </lineage>
</organism>
<proteinExistence type="inferred from homology"/>